<keyword id="KW-0378">Hydrolase</keyword>
<keyword id="KW-0460">Magnesium</keyword>
<keyword id="KW-0479">Metal-binding</keyword>
<keyword id="KW-0546">Nucleotide metabolism</keyword>
<keyword id="KW-0547">Nucleotide-binding</keyword>
<keyword id="KW-1185">Reference proteome</keyword>
<comment type="function">
    <text evidence="1">Pyrophosphatase that catalyzes the hydrolysis of nucleoside triphosphates to their monophosphate derivatives, with a high preference for the non-canonical purine nucleotides XTP (xanthosine triphosphate), dITP (deoxyinosine triphosphate) and ITP. Seems to function as a house-cleaning enzyme that removes non-canonical purine nucleotides from the nucleotide pool, thus preventing their incorporation into DNA/RNA and avoiding chromosomal lesions.</text>
</comment>
<comment type="catalytic activity">
    <reaction evidence="1">
        <text>XTP + H2O = XMP + diphosphate + H(+)</text>
        <dbReference type="Rhea" id="RHEA:28610"/>
        <dbReference type="ChEBI" id="CHEBI:15377"/>
        <dbReference type="ChEBI" id="CHEBI:15378"/>
        <dbReference type="ChEBI" id="CHEBI:33019"/>
        <dbReference type="ChEBI" id="CHEBI:57464"/>
        <dbReference type="ChEBI" id="CHEBI:61314"/>
        <dbReference type="EC" id="3.6.1.66"/>
    </reaction>
</comment>
<comment type="catalytic activity">
    <reaction evidence="1">
        <text>dITP + H2O = dIMP + diphosphate + H(+)</text>
        <dbReference type="Rhea" id="RHEA:28342"/>
        <dbReference type="ChEBI" id="CHEBI:15377"/>
        <dbReference type="ChEBI" id="CHEBI:15378"/>
        <dbReference type="ChEBI" id="CHEBI:33019"/>
        <dbReference type="ChEBI" id="CHEBI:61194"/>
        <dbReference type="ChEBI" id="CHEBI:61382"/>
        <dbReference type="EC" id="3.6.1.66"/>
    </reaction>
</comment>
<comment type="catalytic activity">
    <reaction evidence="1">
        <text>ITP + H2O = IMP + diphosphate + H(+)</text>
        <dbReference type="Rhea" id="RHEA:29399"/>
        <dbReference type="ChEBI" id="CHEBI:15377"/>
        <dbReference type="ChEBI" id="CHEBI:15378"/>
        <dbReference type="ChEBI" id="CHEBI:33019"/>
        <dbReference type="ChEBI" id="CHEBI:58053"/>
        <dbReference type="ChEBI" id="CHEBI:61402"/>
        <dbReference type="EC" id="3.6.1.66"/>
    </reaction>
</comment>
<comment type="cofactor">
    <cofactor evidence="1">
        <name>Mg(2+)</name>
        <dbReference type="ChEBI" id="CHEBI:18420"/>
    </cofactor>
    <text evidence="1">Binds 1 Mg(2+) ion per subunit.</text>
</comment>
<comment type="subunit">
    <text evidence="1">Homodimer.</text>
</comment>
<comment type="similarity">
    <text evidence="1">Belongs to the HAM1 NTPase family.</text>
</comment>
<proteinExistence type="inferred from homology"/>
<accession>Q8YM52</accession>
<sequence>MTKILIVATSNAGKLREMQAYLANTDWELTLKPTELEVEETGDTFASNACLKASEVAKATGNWAIADDSGLQVDALNGLPGVYSARYGKTDGERISRLLKELGSEVNRQAQFVCVVAIASPDGAIALQAEGICRGEILHAPLGSGGFGYDPIFYVPEKQLTFAEMTPELKKSVSHRGKAFAALLPKMAAMLSSSAE</sequence>
<name>IXTPA_NOSS1</name>
<evidence type="ECO:0000255" key="1">
    <source>
        <dbReference type="HAMAP-Rule" id="MF_01405"/>
    </source>
</evidence>
<dbReference type="EC" id="3.6.1.66" evidence="1"/>
<dbReference type="EMBL" id="BA000019">
    <property type="protein sequence ID" value="BAB76787.1"/>
    <property type="molecule type" value="Genomic_DNA"/>
</dbReference>
<dbReference type="PIR" id="AH2441">
    <property type="entry name" value="AH2441"/>
</dbReference>
<dbReference type="SMR" id="Q8YM52"/>
<dbReference type="STRING" id="103690.gene:10497146"/>
<dbReference type="KEGG" id="ana:all5088"/>
<dbReference type="eggNOG" id="COG0127">
    <property type="taxonomic scope" value="Bacteria"/>
</dbReference>
<dbReference type="OrthoDB" id="9807456at2"/>
<dbReference type="Proteomes" id="UP000002483">
    <property type="component" value="Chromosome"/>
</dbReference>
<dbReference type="GO" id="GO:0005829">
    <property type="term" value="C:cytosol"/>
    <property type="evidence" value="ECO:0007669"/>
    <property type="project" value="TreeGrafter"/>
</dbReference>
<dbReference type="GO" id="GO:0035870">
    <property type="term" value="F:dITP diphosphatase activity"/>
    <property type="evidence" value="ECO:0007669"/>
    <property type="project" value="RHEA"/>
</dbReference>
<dbReference type="GO" id="GO:0036220">
    <property type="term" value="F:ITP diphosphatase activity"/>
    <property type="evidence" value="ECO:0007669"/>
    <property type="project" value="UniProtKB-EC"/>
</dbReference>
<dbReference type="GO" id="GO:0046872">
    <property type="term" value="F:metal ion binding"/>
    <property type="evidence" value="ECO:0007669"/>
    <property type="project" value="UniProtKB-KW"/>
</dbReference>
<dbReference type="GO" id="GO:0000166">
    <property type="term" value="F:nucleotide binding"/>
    <property type="evidence" value="ECO:0007669"/>
    <property type="project" value="UniProtKB-KW"/>
</dbReference>
<dbReference type="GO" id="GO:0017111">
    <property type="term" value="F:ribonucleoside triphosphate phosphatase activity"/>
    <property type="evidence" value="ECO:0007669"/>
    <property type="project" value="InterPro"/>
</dbReference>
<dbReference type="GO" id="GO:0036222">
    <property type="term" value="F:XTP diphosphatase activity"/>
    <property type="evidence" value="ECO:0007669"/>
    <property type="project" value="RHEA"/>
</dbReference>
<dbReference type="GO" id="GO:0009117">
    <property type="term" value="P:nucleotide metabolic process"/>
    <property type="evidence" value="ECO:0007669"/>
    <property type="project" value="UniProtKB-KW"/>
</dbReference>
<dbReference type="GO" id="GO:0009146">
    <property type="term" value="P:purine nucleoside triphosphate catabolic process"/>
    <property type="evidence" value="ECO:0007669"/>
    <property type="project" value="UniProtKB-UniRule"/>
</dbReference>
<dbReference type="CDD" id="cd00515">
    <property type="entry name" value="HAM1"/>
    <property type="match status" value="1"/>
</dbReference>
<dbReference type="FunFam" id="3.90.950.10:FF:000001">
    <property type="entry name" value="dITP/XTP pyrophosphatase"/>
    <property type="match status" value="1"/>
</dbReference>
<dbReference type="Gene3D" id="3.90.950.10">
    <property type="match status" value="1"/>
</dbReference>
<dbReference type="HAMAP" id="MF_01405">
    <property type="entry name" value="Non_canon_purine_NTPase"/>
    <property type="match status" value="1"/>
</dbReference>
<dbReference type="InterPro" id="IPR020922">
    <property type="entry name" value="dITP/XTP_pyrophosphatase"/>
</dbReference>
<dbReference type="InterPro" id="IPR029001">
    <property type="entry name" value="ITPase-like_fam"/>
</dbReference>
<dbReference type="InterPro" id="IPR002637">
    <property type="entry name" value="RdgB/HAM1"/>
</dbReference>
<dbReference type="NCBIfam" id="TIGR00042">
    <property type="entry name" value="RdgB/HAM1 family non-canonical purine NTP pyrophosphatase"/>
    <property type="match status" value="1"/>
</dbReference>
<dbReference type="PANTHER" id="PTHR11067:SF9">
    <property type="entry name" value="INOSINE TRIPHOSPHATE PYROPHOSPHATASE"/>
    <property type="match status" value="1"/>
</dbReference>
<dbReference type="PANTHER" id="PTHR11067">
    <property type="entry name" value="INOSINE TRIPHOSPHATE PYROPHOSPHATASE/HAM1 PROTEIN"/>
    <property type="match status" value="1"/>
</dbReference>
<dbReference type="Pfam" id="PF01725">
    <property type="entry name" value="Ham1p_like"/>
    <property type="match status" value="1"/>
</dbReference>
<dbReference type="SUPFAM" id="SSF52972">
    <property type="entry name" value="ITPase-like"/>
    <property type="match status" value="1"/>
</dbReference>
<organism>
    <name type="scientific">Nostoc sp. (strain PCC 7120 / SAG 25.82 / UTEX 2576)</name>
    <dbReference type="NCBI Taxonomy" id="103690"/>
    <lineage>
        <taxon>Bacteria</taxon>
        <taxon>Bacillati</taxon>
        <taxon>Cyanobacteriota</taxon>
        <taxon>Cyanophyceae</taxon>
        <taxon>Nostocales</taxon>
        <taxon>Nostocaceae</taxon>
        <taxon>Nostoc</taxon>
    </lineage>
</organism>
<reference key="1">
    <citation type="journal article" date="2001" name="DNA Res.">
        <title>Complete genomic sequence of the filamentous nitrogen-fixing cyanobacterium Anabaena sp. strain PCC 7120.</title>
        <authorList>
            <person name="Kaneko T."/>
            <person name="Nakamura Y."/>
            <person name="Wolk C.P."/>
            <person name="Kuritz T."/>
            <person name="Sasamoto S."/>
            <person name="Watanabe A."/>
            <person name="Iriguchi M."/>
            <person name="Ishikawa A."/>
            <person name="Kawashima K."/>
            <person name="Kimura T."/>
            <person name="Kishida Y."/>
            <person name="Kohara M."/>
            <person name="Matsumoto M."/>
            <person name="Matsuno A."/>
            <person name="Muraki A."/>
            <person name="Nakazaki N."/>
            <person name="Shimpo S."/>
            <person name="Sugimoto M."/>
            <person name="Takazawa M."/>
            <person name="Yamada M."/>
            <person name="Yasuda M."/>
            <person name="Tabata S."/>
        </authorList>
    </citation>
    <scope>NUCLEOTIDE SEQUENCE [LARGE SCALE GENOMIC DNA]</scope>
    <source>
        <strain>PCC 7120 / SAG 25.82 / UTEX 2576</strain>
    </source>
</reference>
<protein>
    <recommendedName>
        <fullName evidence="1">dITP/XTP pyrophosphatase</fullName>
        <ecNumber evidence="1">3.6.1.66</ecNumber>
    </recommendedName>
    <alternativeName>
        <fullName evidence="1">Non-canonical purine NTP pyrophosphatase</fullName>
    </alternativeName>
    <alternativeName>
        <fullName evidence="1">Non-standard purine NTP pyrophosphatase</fullName>
    </alternativeName>
    <alternativeName>
        <fullName evidence="1">Nucleoside-triphosphate diphosphatase</fullName>
    </alternativeName>
    <alternativeName>
        <fullName evidence="1">Nucleoside-triphosphate pyrophosphatase</fullName>
        <shortName evidence="1">NTPase</shortName>
    </alternativeName>
</protein>
<feature type="chain" id="PRO_0000178116" description="dITP/XTP pyrophosphatase">
    <location>
        <begin position="1"/>
        <end position="196"/>
    </location>
</feature>
<feature type="active site" description="Proton acceptor" evidence="1">
    <location>
        <position position="68"/>
    </location>
</feature>
<feature type="binding site" evidence="1">
    <location>
        <begin position="9"/>
        <end position="14"/>
    </location>
    <ligand>
        <name>substrate</name>
    </ligand>
</feature>
<feature type="binding site" evidence="1">
    <location>
        <position position="39"/>
    </location>
    <ligand>
        <name>Mg(2+)</name>
        <dbReference type="ChEBI" id="CHEBI:18420"/>
    </ligand>
</feature>
<feature type="binding site" evidence="1">
    <location>
        <position position="68"/>
    </location>
    <ligand>
        <name>Mg(2+)</name>
        <dbReference type="ChEBI" id="CHEBI:18420"/>
    </ligand>
</feature>
<feature type="binding site" evidence="1">
    <location>
        <position position="69"/>
    </location>
    <ligand>
        <name>substrate</name>
    </ligand>
</feature>
<feature type="binding site" evidence="1">
    <location>
        <begin position="147"/>
        <end position="150"/>
    </location>
    <ligand>
        <name>substrate</name>
    </ligand>
</feature>
<feature type="binding site" evidence="1">
    <location>
        <position position="170"/>
    </location>
    <ligand>
        <name>substrate</name>
    </ligand>
</feature>
<feature type="binding site" evidence="1">
    <location>
        <begin position="175"/>
        <end position="176"/>
    </location>
    <ligand>
        <name>substrate</name>
    </ligand>
</feature>
<gene>
    <name type="ordered locus">all5088</name>
</gene>